<dbReference type="EMBL" id="L24051">
    <property type="protein sequence ID" value="AAA41759.1"/>
    <property type="status" value="ALT_INIT"/>
    <property type="molecule type" value="mRNA"/>
</dbReference>
<dbReference type="PIR" id="S35069">
    <property type="entry name" value="S35069"/>
</dbReference>
<dbReference type="RefSeq" id="NP_446272.2">
    <property type="nucleotide sequence ID" value="NM_053820.2"/>
</dbReference>
<dbReference type="SMR" id="Q63398"/>
<dbReference type="BioGRID" id="250478">
    <property type="interactions" value="1"/>
</dbReference>
<dbReference type="FunCoup" id="Q63398">
    <property type="interactions" value="838"/>
</dbReference>
<dbReference type="STRING" id="10116.ENSRNOP00000068319"/>
<dbReference type="PhosphoSitePlus" id="Q63398"/>
<dbReference type="PaxDb" id="10116-ENSRNOP00000068319"/>
<dbReference type="GeneID" id="116543"/>
<dbReference type="KEGG" id="rno:116543"/>
<dbReference type="UCSC" id="RGD:620953">
    <property type="organism name" value="rat"/>
</dbReference>
<dbReference type="AGR" id="RGD:620953"/>
<dbReference type="CTD" id="1879"/>
<dbReference type="RGD" id="620953">
    <property type="gene designation" value="Ebf1"/>
</dbReference>
<dbReference type="VEuPathDB" id="HostDB:ENSRNOG00000028845"/>
<dbReference type="eggNOG" id="KOG3836">
    <property type="taxonomic scope" value="Eukaryota"/>
</dbReference>
<dbReference type="HOGENOM" id="CLU_016320_3_1_1"/>
<dbReference type="InParanoid" id="Q63398"/>
<dbReference type="OrthoDB" id="25246at2759"/>
<dbReference type="PhylomeDB" id="Q63398"/>
<dbReference type="TreeFam" id="TF313391"/>
<dbReference type="PRO" id="PR:Q63398"/>
<dbReference type="Proteomes" id="UP000002494">
    <property type="component" value="Chromosome 10"/>
</dbReference>
<dbReference type="Bgee" id="ENSRNOG00000028845">
    <property type="expression patterns" value="Expressed in spleen and 17 other cell types or tissues"/>
</dbReference>
<dbReference type="ExpressionAtlas" id="Q63398">
    <property type="expression patterns" value="baseline and differential"/>
</dbReference>
<dbReference type="GO" id="GO:0005634">
    <property type="term" value="C:nucleus"/>
    <property type="evidence" value="ECO:0000266"/>
    <property type="project" value="RGD"/>
</dbReference>
<dbReference type="GO" id="GO:0070742">
    <property type="term" value="F:C2H2 zinc finger domain binding"/>
    <property type="evidence" value="ECO:0000353"/>
    <property type="project" value="RGD"/>
</dbReference>
<dbReference type="GO" id="GO:0003677">
    <property type="term" value="F:DNA binding"/>
    <property type="evidence" value="ECO:0000266"/>
    <property type="project" value="RGD"/>
</dbReference>
<dbReference type="GO" id="GO:0001228">
    <property type="term" value="F:DNA-binding transcription activator activity, RNA polymerase II-specific"/>
    <property type="evidence" value="ECO:0000266"/>
    <property type="project" value="RGD"/>
</dbReference>
<dbReference type="GO" id="GO:0003700">
    <property type="term" value="F:DNA-binding transcription factor activity"/>
    <property type="evidence" value="ECO:0000266"/>
    <property type="project" value="RGD"/>
</dbReference>
<dbReference type="GO" id="GO:0000981">
    <property type="term" value="F:DNA-binding transcription factor activity, RNA polymerase II-specific"/>
    <property type="evidence" value="ECO:0000318"/>
    <property type="project" value="GO_Central"/>
</dbReference>
<dbReference type="GO" id="GO:0000978">
    <property type="term" value="F:RNA polymerase II cis-regulatory region sequence-specific DNA binding"/>
    <property type="evidence" value="ECO:0000266"/>
    <property type="project" value="RGD"/>
</dbReference>
<dbReference type="GO" id="GO:0008270">
    <property type="term" value="F:zinc ion binding"/>
    <property type="evidence" value="ECO:0007669"/>
    <property type="project" value="UniProtKB-KW"/>
</dbReference>
<dbReference type="GO" id="GO:0045893">
    <property type="term" value="P:positive regulation of DNA-templated transcription"/>
    <property type="evidence" value="ECO:0000266"/>
    <property type="project" value="RGD"/>
</dbReference>
<dbReference type="GO" id="GO:0045944">
    <property type="term" value="P:positive regulation of transcription by RNA polymerase II"/>
    <property type="evidence" value="ECO:0000266"/>
    <property type="project" value="RGD"/>
</dbReference>
<dbReference type="GO" id="GO:0006355">
    <property type="term" value="P:regulation of DNA-templated transcription"/>
    <property type="evidence" value="ECO:0000266"/>
    <property type="project" value="RGD"/>
</dbReference>
<dbReference type="GO" id="GO:0006357">
    <property type="term" value="P:regulation of transcription by RNA polymerase II"/>
    <property type="evidence" value="ECO:0000318"/>
    <property type="project" value="GO_Central"/>
</dbReference>
<dbReference type="CDD" id="cd11606">
    <property type="entry name" value="COE_DBD"/>
    <property type="match status" value="1"/>
</dbReference>
<dbReference type="CDD" id="cd01175">
    <property type="entry name" value="IPT_COE"/>
    <property type="match status" value="1"/>
</dbReference>
<dbReference type="FunFam" id="2.60.40.3180:FF:000004">
    <property type="entry name" value="Transcription factor COE1"/>
    <property type="match status" value="1"/>
</dbReference>
<dbReference type="FunFam" id="1.10.287.4280:FF:000001">
    <property type="entry name" value="transcription factor COE1 isoform X2"/>
    <property type="match status" value="1"/>
</dbReference>
<dbReference type="FunFam" id="2.60.40.10:FF:001696">
    <property type="entry name" value="Transcription factor COE3"/>
    <property type="match status" value="1"/>
</dbReference>
<dbReference type="Gene3D" id="1.10.287.4280">
    <property type="match status" value="1"/>
</dbReference>
<dbReference type="Gene3D" id="2.60.40.10">
    <property type="entry name" value="Immunoglobulins"/>
    <property type="match status" value="1"/>
</dbReference>
<dbReference type="Gene3D" id="2.60.40.3180">
    <property type="entry name" value="Transcription factor COE1, DNA-binding domain"/>
    <property type="match status" value="1"/>
</dbReference>
<dbReference type="InterPro" id="IPR032200">
    <property type="entry name" value="COE_DBD"/>
</dbReference>
<dbReference type="InterPro" id="IPR038173">
    <property type="entry name" value="COE_DBD_sf"/>
</dbReference>
<dbReference type="InterPro" id="IPR032201">
    <property type="entry name" value="COE_HLH"/>
</dbReference>
<dbReference type="InterPro" id="IPR038006">
    <property type="entry name" value="COE_IPT"/>
</dbReference>
<dbReference type="InterPro" id="IPR013783">
    <property type="entry name" value="Ig-like_fold"/>
</dbReference>
<dbReference type="InterPro" id="IPR014756">
    <property type="entry name" value="Ig_E-set"/>
</dbReference>
<dbReference type="InterPro" id="IPR002909">
    <property type="entry name" value="IPT_dom"/>
</dbReference>
<dbReference type="InterPro" id="IPR003523">
    <property type="entry name" value="Transcription_factor_COE"/>
</dbReference>
<dbReference type="InterPro" id="IPR018350">
    <property type="entry name" value="Transcription_factor_COE_CS"/>
</dbReference>
<dbReference type="PANTHER" id="PTHR10747">
    <property type="entry name" value="TRANSCRIPTION FACTOR COE FAMILY MEMBER"/>
    <property type="match status" value="1"/>
</dbReference>
<dbReference type="Pfam" id="PF16422">
    <property type="entry name" value="COE1_DBD"/>
    <property type="match status" value="1"/>
</dbReference>
<dbReference type="Pfam" id="PF16423">
    <property type="entry name" value="COE1_HLH"/>
    <property type="match status" value="1"/>
</dbReference>
<dbReference type="Pfam" id="PF01833">
    <property type="entry name" value="TIG"/>
    <property type="match status" value="1"/>
</dbReference>
<dbReference type="SMART" id="SM00429">
    <property type="entry name" value="IPT"/>
    <property type="match status" value="1"/>
</dbReference>
<dbReference type="SUPFAM" id="SSF81296">
    <property type="entry name" value="E set domains"/>
    <property type="match status" value="1"/>
</dbReference>
<dbReference type="PROSITE" id="PS01345">
    <property type="entry name" value="COE"/>
    <property type="match status" value="1"/>
</dbReference>
<gene>
    <name type="primary">Ebf1</name>
    <name type="synonym">Coe1</name>
    <name type="synonym">Ebf</name>
    <name type="synonym">Olf1</name>
</gene>
<keyword id="KW-0007">Acetylation</keyword>
<keyword id="KW-0010">Activator</keyword>
<keyword id="KW-0217">Developmental protein</keyword>
<keyword id="KW-0238">DNA-binding</keyword>
<keyword id="KW-1017">Isopeptide bond</keyword>
<keyword id="KW-0479">Metal-binding</keyword>
<keyword id="KW-0539">Nucleus</keyword>
<keyword id="KW-1185">Reference proteome</keyword>
<keyword id="KW-0804">Transcription</keyword>
<keyword id="KW-0805">Transcription regulation</keyword>
<keyword id="KW-0832">Ubl conjugation</keyword>
<keyword id="KW-0862">Zinc</keyword>
<keyword id="KW-0863">Zinc-finger</keyword>
<organism>
    <name type="scientific">Rattus norvegicus</name>
    <name type="common">Rat</name>
    <dbReference type="NCBI Taxonomy" id="10116"/>
    <lineage>
        <taxon>Eukaryota</taxon>
        <taxon>Metazoa</taxon>
        <taxon>Chordata</taxon>
        <taxon>Craniata</taxon>
        <taxon>Vertebrata</taxon>
        <taxon>Euteleostomi</taxon>
        <taxon>Mammalia</taxon>
        <taxon>Eutheria</taxon>
        <taxon>Euarchontoglires</taxon>
        <taxon>Glires</taxon>
        <taxon>Rodentia</taxon>
        <taxon>Myomorpha</taxon>
        <taxon>Muroidea</taxon>
        <taxon>Muridae</taxon>
        <taxon>Murinae</taxon>
        <taxon>Rattus</taxon>
    </lineage>
</organism>
<proteinExistence type="evidence at protein level"/>
<evidence type="ECO:0000250" key="1">
    <source>
        <dbReference type="UniProtKB" id="Q07802"/>
    </source>
</evidence>
<evidence type="ECO:0000250" key="2">
    <source>
        <dbReference type="UniProtKB" id="Q9UH73"/>
    </source>
</evidence>
<evidence type="ECO:0000256" key="3">
    <source>
        <dbReference type="SAM" id="MobiDB-lite"/>
    </source>
</evidence>
<evidence type="ECO:0000269" key="4">
    <source>
    </source>
</evidence>
<evidence type="ECO:0000305" key="5"/>
<sequence>MFGIQESIQRSGSSMKEEPLGSGMNAVRTWMQGAGVLDANTAAQSGVGLARAHFEKQPPSNLRKSNFFHFVLALYDRQGQPVEIERTAFVGFVEKEKEANSEKTNNGIHYRLQLLYSNGIRTEQDFYVRLIDSMTKQAIVYEGQDKNPEMCRVLLTHEIMCSRCCDKKSCGNRNETPSDPVIIDRFFLKFFLKCNQNCLKNAGNPRDMRRFQVVVSTTVNVDGHVLAVSDNMFVHNNSKHGRRARRLDPSEAATPCIKAISPSEGWTTGGATVIIIGDNFFDGLQVIFGTMLVWSELITPHAIRVQTPPRHIPGVVEVTLSYKSKQFCKGTPGRFIYTALNEPTIDYGFQRLQKVIPRHPGDPERLPKEVILKRAADLVEALYGMPHNNQEIILKRAADIAEALYSVPRNHNQLPALANTSVHAGMMGVNSFSGQLAVNVSEASQATNQGFTRNSSSVSPHGYVPSTTPQQTNYNSVTTSMNGYGSAAMSNLGGSPTFLNGSAANSPYAIVPSSPTMASSTSLPSNCSSSSGIFSFSPANMVSAVKQKSAFAPVVRPQTSPPPTCTSTNGNSLQAISGMIVPPM</sequence>
<name>COE1_RAT</name>
<protein>
    <recommendedName>
        <fullName>Transcription factor COE1</fullName>
        <shortName>O/E-1</shortName>
        <shortName>OE-1</shortName>
    </recommendedName>
    <alternativeName>
        <fullName>Early B-cell factor</fullName>
    </alternativeName>
    <alternativeName>
        <fullName>Olf-1</fullName>
    </alternativeName>
    <alternativeName>
        <fullName>Olfactory neuronal transcription factor</fullName>
    </alternativeName>
</protein>
<comment type="function">
    <text evidence="1">Key pioneer transcription factor of B-cell specification and commitment. Recognizes variations of the palindromic sequence 5'-ATTCCCNNGGGAATT-3'. Operates in a transcription factor network to activate B-cell-specific genes and repress genes associated with alternative cell fates. For instance, positively regulates many B-cell specific genes including BCR or CD40 while repressing genes that direct cells into alternative lineages, including GATA3 and TCF7 for the T-cell lineage. In addition to its role during lymphopoiesis, controls the thermogenic gene program in adipocytes during development and in response to environmental cold.</text>
</comment>
<comment type="subunit">
    <text evidence="1 2 4">Homodimer (By similarity). Interacts with ZNF423 and ZNF521, leading to prevent EBF1 to bind DNA and activate target genes (PubMed:9151733). Interacts with CCR4-NOT component CNOT3 (By similarity).</text>
</comment>
<comment type="subcellular location">
    <subcellularLocation>
        <location>Nucleus</location>
    </subcellularLocation>
</comment>
<comment type="tissue specificity">
    <text>Expressed exclusively in olfactory receptor neurons and their precursors.</text>
</comment>
<comment type="similarity">
    <text evidence="5">Belongs to the COE family.</text>
</comment>
<comment type="sequence caution" evidence="5">
    <conflict type="erroneous initiation">
        <sequence resource="EMBL-CDS" id="AAA41759"/>
    </conflict>
</comment>
<feature type="chain" id="PRO_0000107827" description="Transcription factor COE1">
    <location>
        <begin position="1"/>
        <end position="584"/>
    </location>
</feature>
<feature type="domain" description="IPT/TIG">
    <location>
        <begin position="255"/>
        <end position="338"/>
    </location>
</feature>
<feature type="zinc finger region" description="C5-type" evidence="1">
    <location>
        <begin position="151"/>
        <end position="170"/>
    </location>
</feature>
<feature type="region of interest" description="Disordered" evidence="3">
    <location>
        <begin position="1"/>
        <end position="21"/>
    </location>
</feature>
<feature type="region of interest" description="Interaction with DNA" evidence="1">
    <location>
        <begin position="63"/>
        <end position="66"/>
    </location>
</feature>
<feature type="region of interest" description="Interaction with DNA" evidence="1">
    <location>
        <begin position="197"/>
        <end position="204"/>
    </location>
</feature>
<feature type="region of interest" description="Interaction with DNA" evidence="1">
    <location>
        <begin position="236"/>
        <end position="239"/>
    </location>
</feature>
<feature type="region of interest" description="Disordered" evidence="3">
    <location>
        <begin position="450"/>
        <end position="473"/>
    </location>
</feature>
<feature type="compositionally biased region" description="Polar residues" evidence="3">
    <location>
        <begin position="1"/>
        <end position="14"/>
    </location>
</feature>
<feature type="site" description="Interaction with DNA" evidence="1">
    <location>
        <position position="163"/>
    </location>
</feature>
<feature type="site" description="Interaction with DNA" evidence="1">
    <location>
        <position position="172"/>
    </location>
</feature>
<feature type="modified residue" description="N-acetylmethionine" evidence="2">
    <location>
        <position position="1"/>
    </location>
</feature>
<feature type="cross-link" description="Glycyl lysine isopeptide (Lys-Gly) (interchain with G-Cter in SUMO1); alternate" evidence="2">
    <location>
        <position position="16"/>
    </location>
</feature>
<feature type="cross-link" description="Glycyl lysine isopeptide (Lys-Gly) (interchain with G-Cter in SUMO2); alternate" evidence="2">
    <location>
        <position position="16"/>
    </location>
</feature>
<accession>Q63398</accession>
<reference key="1">
    <citation type="journal article" date="1993" name="Nature">
        <title>Molecular cloning of the olfactory neuronal transcription factor Olf-1 by genetic selection in yeast.</title>
        <authorList>
            <person name="Wang M.M."/>
            <person name="Reed R.R."/>
        </authorList>
    </citation>
    <scope>NUCLEOTIDE SEQUENCE [MRNA]</scope>
    <scope>CHARACTERIZATION</scope>
</reference>
<reference key="2">
    <citation type="journal article" date="1997" name="J. Neurosci.">
        <title>Cloning and functional characterization of Roaz, a zinc finger protein that interacts with O/E-1 to regulate gene expression: implications for olfactory neuronal development.</title>
        <authorList>
            <person name="Tsai R.Y.L."/>
            <person name="Reed R.R."/>
        </authorList>
    </citation>
    <scope>INTERACTION WITH ZNF423</scope>
</reference>